<sequence>MEKYEKTKVVGRGAFGIVHLCRRRTDSALVILKEIPVEQMTRDERLAAQNECQVLKLLSHPNIIEYYENFLEDKALMIAMEYAPGGTLADYIQKRCNSLLDEDTILHSFVQILLALYHVHNKLILHRDLKTQNILLDKHQMIVKIGDFGISKILVSKSKAYTVVGTPCYISPELCEGKPYNQKSDIWALGCVLYELASLKRAFEAANLPALVLKIMSGTFAPISDRYSPELRQLILNMLNLDPSKRPQLNEIMAHAICIRPLLNLYTDIGNVKMRRIEKPLSNVQAGPHGRPGGWITSTRTRGGLSSLTSSKMMHPLPLFSVYTWGSGISTPLRLPMLNTEVIQVSLGRTQKMGVTKSGRLITWEAPSVGSGEPTLPGAVEQMQPQFISRFLEGQSGVTIKSVSCGDLFTTCLTDRGIIMTFGSGSNGCLGHGNFNDVTQPKIVEALLGYELVQVSCGASHVLAVTNEREVFSWGRGDNGRLGLATQDSHNCPQQVSLPADFEAQRVLCGVDCSMIMSTQHQILACGNNRFNKLGLDKVSGTEEPSSFCQVEEVHLFQLVQSAPLNTEKIVYIDIGTAHSVAVTEKGQCFTFGSNQHGQLGCSHRRSSRVPYQVSGLQGITMAACGDAFTLAIGAEGEVYTWGKGARGRLGRKEEDFGIPKPVQLDESHAFTVTSVACCHGNTLLAVKPFFEEPGPK</sequence>
<feature type="chain" id="PRO_0000086434" description="Serine/threonine-protein kinase Nek8">
    <location>
        <begin position="1"/>
        <end position="697"/>
    </location>
</feature>
<feature type="domain" description="Protein kinase" evidence="4">
    <location>
        <begin position="4"/>
        <end position="263"/>
    </location>
</feature>
<feature type="repeat" description="RCC1 1">
    <location>
        <begin position="417"/>
        <end position="468"/>
    </location>
</feature>
<feature type="repeat" description="RCC1 2">
    <location>
        <begin position="469"/>
        <end position="520"/>
    </location>
</feature>
<feature type="repeat" description="RCC1 3">
    <location>
        <begin position="521"/>
        <end position="586"/>
    </location>
</feature>
<feature type="repeat" description="RCC1 4">
    <location>
        <begin position="587"/>
        <end position="636"/>
    </location>
</feature>
<feature type="repeat" description="RCC1 5">
    <location>
        <begin position="637"/>
        <end position="689"/>
    </location>
</feature>
<feature type="active site" description="Proton acceptor" evidence="4 5">
    <location>
        <position position="128"/>
    </location>
</feature>
<feature type="binding site" evidence="4">
    <location>
        <begin position="10"/>
        <end position="18"/>
    </location>
    <ligand>
        <name>ATP</name>
        <dbReference type="ChEBI" id="CHEBI:30616"/>
    </ligand>
</feature>
<feature type="binding site" evidence="4">
    <location>
        <position position="33"/>
    </location>
    <ligand>
        <name>ATP</name>
        <dbReference type="ChEBI" id="CHEBI:30616"/>
    </ligand>
</feature>
<feature type="modified residue" description="Phosphothreonine; by autocatalysis" evidence="1">
    <location>
        <position position="162"/>
    </location>
</feature>
<protein>
    <recommendedName>
        <fullName>Serine/threonine-protein kinase Nek8</fullName>
        <ecNumber>2.7.11.1</ecNumber>
    </recommendedName>
    <alternativeName>
        <fullName>Never in mitosis A-related kinase 8</fullName>
        <shortName>NimA-related protein kinase 8</shortName>
    </alternativeName>
</protein>
<gene>
    <name type="primary">nek8</name>
</gene>
<keyword id="KW-0067">ATP-binding</keyword>
<keyword id="KW-0131">Cell cycle</keyword>
<keyword id="KW-0132">Cell division</keyword>
<keyword id="KW-0966">Cell projection</keyword>
<keyword id="KW-0963">Cytoplasm</keyword>
<keyword id="KW-0206">Cytoskeleton</keyword>
<keyword id="KW-0418">Kinase</keyword>
<keyword id="KW-0460">Magnesium</keyword>
<keyword id="KW-0479">Metal-binding</keyword>
<keyword id="KW-0498">Mitosis</keyword>
<keyword id="KW-0547">Nucleotide-binding</keyword>
<keyword id="KW-0597">Phosphoprotein</keyword>
<keyword id="KW-1185">Reference proteome</keyword>
<keyword id="KW-0677">Repeat</keyword>
<keyword id="KW-0723">Serine/threonine-protein kinase</keyword>
<keyword id="KW-0808">Transferase</keyword>
<accession>Q90XC2</accession>
<proteinExistence type="evidence at transcript level"/>
<evidence type="ECO:0000250" key="1"/>
<evidence type="ECO:0000250" key="2">
    <source>
        <dbReference type="UniProtKB" id="Q86SG6"/>
    </source>
</evidence>
<evidence type="ECO:0000250" key="3">
    <source>
        <dbReference type="UniProtKB" id="Q91ZR4"/>
    </source>
</evidence>
<evidence type="ECO:0000255" key="4">
    <source>
        <dbReference type="PROSITE-ProRule" id="PRU00159"/>
    </source>
</evidence>
<evidence type="ECO:0000255" key="5">
    <source>
        <dbReference type="PROSITE-ProRule" id="PRU10027"/>
    </source>
</evidence>
<evidence type="ECO:0000269" key="6">
    <source>
    </source>
</evidence>
<evidence type="ECO:0000269" key="7">
    <source>
    </source>
</evidence>
<evidence type="ECO:0000305" key="8"/>
<dbReference type="EC" id="2.7.11.1"/>
<dbReference type="EMBL" id="AF407580">
    <property type="protein sequence ID" value="AAL09676.1"/>
    <property type="molecule type" value="mRNA"/>
</dbReference>
<dbReference type="RefSeq" id="NP_620776.1">
    <property type="nucleotide sequence ID" value="NM_139077.1"/>
</dbReference>
<dbReference type="SMR" id="Q90XC2"/>
<dbReference type="FunCoup" id="Q90XC2">
    <property type="interactions" value="1264"/>
</dbReference>
<dbReference type="STRING" id="7955.ENSDARP00000067094"/>
<dbReference type="PaxDb" id="7955-ENSDARP00000067094"/>
<dbReference type="GeneID" id="171094"/>
<dbReference type="KEGG" id="dre:171094"/>
<dbReference type="AGR" id="ZFIN:ZDB-GENE-020509-1"/>
<dbReference type="CTD" id="284086"/>
<dbReference type="ZFIN" id="ZDB-GENE-020509-1">
    <property type="gene designation" value="nek8"/>
</dbReference>
<dbReference type="eggNOG" id="KOG0589">
    <property type="taxonomic scope" value="Eukaryota"/>
</dbReference>
<dbReference type="InParanoid" id="Q90XC2"/>
<dbReference type="OrthoDB" id="248923at2759"/>
<dbReference type="PhylomeDB" id="Q90XC2"/>
<dbReference type="PRO" id="PR:Q90XC2"/>
<dbReference type="Proteomes" id="UP000000437">
    <property type="component" value="Alternate scaffold 15"/>
</dbReference>
<dbReference type="Proteomes" id="UP000000437">
    <property type="component" value="Chromosome 15"/>
</dbReference>
<dbReference type="GO" id="GO:0005813">
    <property type="term" value="C:centrosome"/>
    <property type="evidence" value="ECO:0007669"/>
    <property type="project" value="UniProtKB-SubCell"/>
</dbReference>
<dbReference type="GO" id="GO:0005929">
    <property type="term" value="C:cilium"/>
    <property type="evidence" value="ECO:0000314"/>
    <property type="project" value="ZFIN"/>
</dbReference>
<dbReference type="GO" id="GO:0005737">
    <property type="term" value="C:cytoplasm"/>
    <property type="evidence" value="ECO:0007669"/>
    <property type="project" value="UniProtKB-SubCell"/>
</dbReference>
<dbReference type="GO" id="GO:0005524">
    <property type="term" value="F:ATP binding"/>
    <property type="evidence" value="ECO:0007669"/>
    <property type="project" value="UniProtKB-KW"/>
</dbReference>
<dbReference type="GO" id="GO:0046872">
    <property type="term" value="F:metal ion binding"/>
    <property type="evidence" value="ECO:0007669"/>
    <property type="project" value="UniProtKB-KW"/>
</dbReference>
<dbReference type="GO" id="GO:0106310">
    <property type="term" value="F:protein serine kinase activity"/>
    <property type="evidence" value="ECO:0007669"/>
    <property type="project" value="RHEA"/>
</dbReference>
<dbReference type="GO" id="GO:0004674">
    <property type="term" value="F:protein serine/threonine kinase activity"/>
    <property type="evidence" value="ECO:0007669"/>
    <property type="project" value="UniProtKB-KW"/>
</dbReference>
<dbReference type="GO" id="GO:0009887">
    <property type="term" value="P:animal organ morphogenesis"/>
    <property type="evidence" value="ECO:0000318"/>
    <property type="project" value="GO_Central"/>
</dbReference>
<dbReference type="GO" id="GO:0051301">
    <property type="term" value="P:cell division"/>
    <property type="evidence" value="ECO:0007669"/>
    <property type="project" value="UniProtKB-KW"/>
</dbReference>
<dbReference type="GO" id="GO:0061371">
    <property type="term" value="P:determination of heart left/right asymmetry"/>
    <property type="evidence" value="ECO:0000315"/>
    <property type="project" value="ZFIN"/>
</dbReference>
<dbReference type="GO" id="GO:0001947">
    <property type="term" value="P:heart looping"/>
    <property type="evidence" value="ECO:0000315"/>
    <property type="project" value="ZFIN"/>
</dbReference>
<dbReference type="GO" id="GO:0048793">
    <property type="term" value="P:pronephros development"/>
    <property type="evidence" value="ECO:0000316"/>
    <property type="project" value="ZFIN"/>
</dbReference>
<dbReference type="GO" id="GO:0072116">
    <property type="term" value="P:pronephros formation"/>
    <property type="evidence" value="ECO:0000316"/>
    <property type="project" value="ZFIN"/>
</dbReference>
<dbReference type="GO" id="GO:0061326">
    <property type="term" value="P:renal tubule development"/>
    <property type="evidence" value="ECO:0000315"/>
    <property type="project" value="ZFIN"/>
</dbReference>
<dbReference type="CDD" id="cd08220">
    <property type="entry name" value="STKc_Nek8"/>
    <property type="match status" value="1"/>
</dbReference>
<dbReference type="FunFam" id="1.10.510.10:FF:000262">
    <property type="entry name" value="Serine/threonine-protein kinase Nek8"/>
    <property type="match status" value="1"/>
</dbReference>
<dbReference type="FunFam" id="2.130.10.30:FF:000017">
    <property type="entry name" value="Serine/threonine-protein kinase Nek8"/>
    <property type="match status" value="1"/>
</dbReference>
<dbReference type="FunFam" id="2.130.10.30:FF:000032">
    <property type="entry name" value="Serine/threonine-protein kinase Nek8"/>
    <property type="match status" value="1"/>
</dbReference>
<dbReference type="FunFam" id="3.30.200.20:FF:000243">
    <property type="entry name" value="serine/threonine-protein kinase Nek8"/>
    <property type="match status" value="1"/>
</dbReference>
<dbReference type="Gene3D" id="3.30.200.20">
    <property type="entry name" value="Phosphorylase Kinase, domain 1"/>
    <property type="match status" value="1"/>
</dbReference>
<dbReference type="Gene3D" id="2.130.10.30">
    <property type="entry name" value="Regulator of chromosome condensation 1/beta-lactamase-inhibitor protein II"/>
    <property type="match status" value="2"/>
</dbReference>
<dbReference type="Gene3D" id="1.10.510.10">
    <property type="entry name" value="Transferase(Phosphotransferase) domain 1"/>
    <property type="match status" value="1"/>
</dbReference>
<dbReference type="InterPro" id="IPR011009">
    <property type="entry name" value="Kinase-like_dom_sf"/>
</dbReference>
<dbReference type="InterPro" id="IPR000719">
    <property type="entry name" value="Prot_kinase_dom"/>
</dbReference>
<dbReference type="InterPro" id="IPR017441">
    <property type="entry name" value="Protein_kinase_ATP_BS"/>
</dbReference>
<dbReference type="InterPro" id="IPR009091">
    <property type="entry name" value="RCC1/BLIP-II"/>
</dbReference>
<dbReference type="InterPro" id="IPR000408">
    <property type="entry name" value="Reg_chr_condens"/>
</dbReference>
<dbReference type="InterPro" id="IPR008271">
    <property type="entry name" value="Ser/Thr_kinase_AS"/>
</dbReference>
<dbReference type="InterPro" id="IPR051997">
    <property type="entry name" value="STK_NEK"/>
</dbReference>
<dbReference type="InterPro" id="IPR044120">
    <property type="entry name" value="STKc_Nek8"/>
</dbReference>
<dbReference type="PANTHER" id="PTHR44535">
    <property type="entry name" value="PROTEIN CBG16200"/>
    <property type="match status" value="1"/>
</dbReference>
<dbReference type="PANTHER" id="PTHR44535:SF4">
    <property type="entry name" value="SERINE_THREONINE-PROTEIN KINASE NEK8"/>
    <property type="match status" value="1"/>
</dbReference>
<dbReference type="Pfam" id="PF00069">
    <property type="entry name" value="Pkinase"/>
    <property type="match status" value="1"/>
</dbReference>
<dbReference type="Pfam" id="PF25390">
    <property type="entry name" value="WD40_RLD"/>
    <property type="match status" value="1"/>
</dbReference>
<dbReference type="PRINTS" id="PR00633">
    <property type="entry name" value="RCCNDNSATION"/>
</dbReference>
<dbReference type="SMART" id="SM00220">
    <property type="entry name" value="S_TKc"/>
    <property type="match status" value="1"/>
</dbReference>
<dbReference type="SUPFAM" id="SSF56112">
    <property type="entry name" value="Protein kinase-like (PK-like)"/>
    <property type="match status" value="1"/>
</dbReference>
<dbReference type="SUPFAM" id="SSF50985">
    <property type="entry name" value="RCC1/BLIP-II"/>
    <property type="match status" value="1"/>
</dbReference>
<dbReference type="PROSITE" id="PS00107">
    <property type="entry name" value="PROTEIN_KINASE_ATP"/>
    <property type="match status" value="1"/>
</dbReference>
<dbReference type="PROSITE" id="PS50011">
    <property type="entry name" value="PROTEIN_KINASE_DOM"/>
    <property type="match status" value="1"/>
</dbReference>
<dbReference type="PROSITE" id="PS00108">
    <property type="entry name" value="PROTEIN_KINASE_ST"/>
    <property type="match status" value="1"/>
</dbReference>
<dbReference type="PROSITE" id="PS50012">
    <property type="entry name" value="RCC1_3"/>
    <property type="match status" value="4"/>
</dbReference>
<organism>
    <name type="scientific">Danio rerio</name>
    <name type="common">Zebrafish</name>
    <name type="synonym">Brachydanio rerio</name>
    <dbReference type="NCBI Taxonomy" id="7955"/>
    <lineage>
        <taxon>Eukaryota</taxon>
        <taxon>Metazoa</taxon>
        <taxon>Chordata</taxon>
        <taxon>Craniata</taxon>
        <taxon>Vertebrata</taxon>
        <taxon>Euteleostomi</taxon>
        <taxon>Actinopterygii</taxon>
        <taxon>Neopterygii</taxon>
        <taxon>Teleostei</taxon>
        <taxon>Ostariophysi</taxon>
        <taxon>Cypriniformes</taxon>
        <taxon>Danionidae</taxon>
        <taxon>Danioninae</taxon>
        <taxon>Danio</taxon>
    </lineage>
</organism>
<reference key="1">
    <citation type="journal article" date="2002" name="Development">
        <title>A defect in a novel Nek-family kinase causes cystic kidney disease in the mouse and in zebrafish.</title>
        <authorList>
            <person name="Liu S."/>
            <person name="Lu W."/>
            <person name="Obara T."/>
            <person name="Kuida S."/>
            <person name="Lehoczky J."/>
            <person name="Dewar K."/>
            <person name="Drummond I.A."/>
            <person name="Beier D.R."/>
        </authorList>
    </citation>
    <scope>NUCLEOTIDE SEQUENCE [MRNA]</scope>
</reference>
<reference key="2">
    <citation type="journal article" date="2013" name="Nat. Genet.">
        <title>ANKS6 is a central component of a nephronophthisis module linking NEK8 to INVS and NPHP3.</title>
        <authorList>
            <person name="Hoff S."/>
            <person name="Halbritter J."/>
            <person name="Epting D."/>
            <person name="Frank V."/>
            <person name="Nguyen T.M."/>
            <person name="van Reeuwijk J."/>
            <person name="Boehlke C."/>
            <person name="Schell C."/>
            <person name="Yasunaga T."/>
            <person name="Helmstadter M."/>
            <person name="Mergen M."/>
            <person name="Filhol E."/>
            <person name="Boldt K."/>
            <person name="Horn N."/>
            <person name="Ueffing M."/>
            <person name="Otto E.A."/>
            <person name="Eisenberger T."/>
            <person name="Elting M.W."/>
            <person name="van Wijk J.A."/>
            <person name="Bockenhauer D."/>
            <person name="Sebire N.J."/>
            <person name="Rittig S."/>
            <person name="Vyberg M."/>
            <person name="Ring T."/>
            <person name="Pohl M."/>
            <person name="Pape L."/>
            <person name="Neuhaus T.J."/>
            <person name="Elshakhs N.A."/>
            <person name="Koon S.J."/>
            <person name="Harris P.C."/>
            <person name="Grahammer F."/>
            <person name="Huber T.B."/>
            <person name="Kuehn E.W."/>
            <person name="Kramer-Zucker A."/>
            <person name="Bolz H.J."/>
            <person name="Roepman R."/>
            <person name="Saunier S."/>
            <person name="Walz G."/>
            <person name="Hildebrandt F."/>
            <person name="Bergmann C."/>
            <person name="Lienkamp S.S."/>
        </authorList>
    </citation>
    <scope>DISRUPTION PHENOTYPE</scope>
</reference>
<reference key="3">
    <citation type="journal article" date="2016" name="PLoS Genet.">
        <title>Novel NEK8 Mutations Cause Severe Syndromic Renal Cystic Dysplasia through YAP Dysregulation.</title>
        <authorList>
            <person name="Grampa V."/>
            <person name="Delous M."/>
            <person name="Zaidan M."/>
            <person name="Odye G."/>
            <person name="Thomas S."/>
            <person name="Elkhartoufi N."/>
            <person name="Filhol E."/>
            <person name="Niel O."/>
            <person name="Silbermann F."/>
            <person name="Lebreton C."/>
            <person name="Collardeau-Frachon S."/>
            <person name="Rouvet I."/>
            <person name="Alessandri J.L."/>
            <person name="Devisme L."/>
            <person name="Dieux-Coeslier A."/>
            <person name="Cordier M.P."/>
            <person name="Capri Y."/>
            <person name="Khung-Savatovsky S."/>
            <person name="Sigaudy S."/>
            <person name="Salomon R."/>
            <person name="Antignac C."/>
            <person name="Gubler M.C."/>
            <person name="Benmerah A."/>
            <person name="Terzi F."/>
            <person name="Attie-Bitach T."/>
            <person name="Jeanpierre C."/>
            <person name="Saunier S."/>
        </authorList>
    </citation>
    <scope>DISRUPTION PHENOTYPE</scope>
</reference>
<name>NEK8_DANRE</name>
<comment type="function">
    <text evidence="3">Required for renal tubular integrity. May regulate local cytoskeletal structure in kidney tubule epithelial cells. May regulate ciliary biogenesis through targeting of proteins to the cilia. Plays a role in organogenesis and is involved in the regulation of the Hippo signaling pathway (By similarity).</text>
</comment>
<comment type="catalytic activity">
    <reaction>
        <text>L-seryl-[protein] + ATP = O-phospho-L-seryl-[protein] + ADP + H(+)</text>
        <dbReference type="Rhea" id="RHEA:17989"/>
        <dbReference type="Rhea" id="RHEA-COMP:9863"/>
        <dbReference type="Rhea" id="RHEA-COMP:11604"/>
        <dbReference type="ChEBI" id="CHEBI:15378"/>
        <dbReference type="ChEBI" id="CHEBI:29999"/>
        <dbReference type="ChEBI" id="CHEBI:30616"/>
        <dbReference type="ChEBI" id="CHEBI:83421"/>
        <dbReference type="ChEBI" id="CHEBI:456216"/>
        <dbReference type="EC" id="2.7.11.1"/>
    </reaction>
</comment>
<comment type="catalytic activity">
    <reaction>
        <text>L-threonyl-[protein] + ATP = O-phospho-L-threonyl-[protein] + ADP + H(+)</text>
        <dbReference type="Rhea" id="RHEA:46608"/>
        <dbReference type="Rhea" id="RHEA-COMP:11060"/>
        <dbReference type="Rhea" id="RHEA-COMP:11605"/>
        <dbReference type="ChEBI" id="CHEBI:15378"/>
        <dbReference type="ChEBI" id="CHEBI:30013"/>
        <dbReference type="ChEBI" id="CHEBI:30616"/>
        <dbReference type="ChEBI" id="CHEBI:61977"/>
        <dbReference type="ChEBI" id="CHEBI:456216"/>
        <dbReference type="EC" id="2.7.11.1"/>
    </reaction>
</comment>
<comment type="cofactor">
    <cofactor evidence="1">
        <name>Mg(2+)</name>
        <dbReference type="ChEBI" id="CHEBI:18420"/>
    </cofactor>
</comment>
<comment type="subcellular location">
    <subcellularLocation>
        <location evidence="3">Cytoplasm</location>
    </subcellularLocation>
    <subcellularLocation>
        <location evidence="3">Cytoplasm</location>
        <location evidence="3">Cytoskeleton</location>
    </subcellularLocation>
    <subcellularLocation>
        <location evidence="3">Cell projection</location>
        <location evidence="3">Cilium</location>
    </subcellularLocation>
    <subcellularLocation>
        <location evidence="2">Cytoplasm</location>
        <location evidence="2">Cytoskeleton</location>
        <location evidence="2">Cilium axoneme</location>
    </subcellularLocation>
    <subcellularLocation>
        <location evidence="2">Cytoplasm</location>
        <location evidence="2">Cytoskeleton</location>
        <location evidence="2">Microtubule organizing center</location>
        <location evidence="2">Centrosome</location>
    </subcellularLocation>
    <text evidence="3">Predominantly cytoplasmic. Localizes to the proximal region of the primary cilium and is not observed in dividing cells (By similarity).</text>
</comment>
<comment type="disruption phenotype">
    <text evidence="6 7">Morpholino knockdown of the protein in the embryo causes ventral body curvature, pronephric cyst formation and laterality defects, including reversed heart looping.</text>
</comment>
<comment type="similarity">
    <text evidence="8">Belongs to the protein kinase superfamily. NEK Ser/Thr protein kinase family. NIMA subfamily.</text>
</comment>